<organism>
    <name type="scientific">Orgyia pseudotsugata multicapsid polyhedrosis virus</name>
    <name type="common">OpMNPV</name>
    <dbReference type="NCBI Taxonomy" id="262177"/>
    <lineage>
        <taxon>Viruses</taxon>
        <taxon>Viruses incertae sedis</taxon>
        <taxon>Naldaviricetes</taxon>
        <taxon>Lefavirales</taxon>
        <taxon>Baculoviridae</taxon>
        <taxon>Alphabaculovirus</taxon>
        <taxon>Alphabaculovirus orpseudotsugatae</taxon>
    </lineage>
</organism>
<keyword id="KW-1185">Reference proteome</keyword>
<reference key="1">
    <citation type="journal article" date="1997" name="Virology">
        <title>The sequence of the Orgyia pseudotsugata multinucleocapsid nuclear polyhedrosis virus genome.</title>
        <authorList>
            <person name="Ahrens C.H."/>
            <person name="Russell R.R."/>
            <person name="Funk C.J."/>
            <person name="Evans J."/>
            <person name="Harwood S."/>
            <person name="Rohrmann G.F."/>
        </authorList>
    </citation>
    <scope>NUCLEOTIDE SEQUENCE [LARGE SCALE GENOMIC DNA]</scope>
</reference>
<reference key="2">
    <citation type="journal article" date="1996" name="J. Gen. Virol.">
        <title>The DNA polymerase and helicase genes of a baculovirus of Orgyia pseudosugata.</title>
        <authorList>
            <person name="Ahrens C.H."/>
            <person name="Rohrmann G.F."/>
        </authorList>
    </citation>
    <scope>NUCLEOTIDE SEQUENCE [GENOMIC DNA] OF 1-807</scope>
</reference>
<reference key="3">
    <citation type="journal article" date="1995" name="Virology">
        <title>Identification, sequence, and transcriptional analysis of lef-3, a gene essential for Orgyia pseudotsugata baculovirus DNA replication.</title>
        <authorList>
            <person name="Ahrens C.H."/>
            <person name="Carlson C."/>
            <person name="Rohrmann G.F."/>
        </authorList>
    </citation>
    <scope>NUCLEOTIDE SEQUENCE [GENOMIC DNA] OF 806-875</scope>
</reference>
<organismHost>
    <name type="scientific">Orgyia pseudotsugata</name>
    <name type="common">Douglas-fir tussock moth</name>
    <dbReference type="NCBI Taxonomy" id="33414"/>
</organismHost>
<proteinExistence type="predicted"/>
<feature type="chain" id="PRO_0000133004" description="Uncharacterized 98.6 kDa protein">
    <location>
        <begin position="1"/>
        <end position="875"/>
    </location>
</feature>
<feature type="region of interest" description="Disordered" evidence="1">
    <location>
        <begin position="83"/>
        <end position="149"/>
    </location>
</feature>
<feature type="compositionally biased region" description="Pro residues" evidence="1">
    <location>
        <begin position="101"/>
        <end position="147"/>
    </location>
</feature>
<evidence type="ECO:0000256" key="1">
    <source>
        <dbReference type="SAM" id="MobiDB-lite"/>
    </source>
</evidence>
<sequence>MQRDLLSTINSMSARIKALERYEHALREIHKVIVVMRPGFNLQVLDPDAMPALIVQFFSDLTGRNTTHNINYRYDYNVGGALPFQPPPPQPFYPYGQYWPQQPPQPPPDQPQQPQPPQQPPQQPPQQQPQPPQPPQQPPQPPQPPPQQLALVQQIELSVDEVRELQALQLNMQQQTITWSHFATFIGTMTRILQTRVVNSAFLIGAIEALQNVDRLTNYDFNEFLRCVANETALRFEIAPDLCRVVAAFIQFFQKTHMVVYRTTFTYVNSQSLTASAEALHLVIVKLFWFFSKIYVYVMRAEFVYTNSTALAATIEELYARVEAIPVAAQNSAELAQLHAEMRALRTVTADLQGMRDSAEQRLQAANARYEAADAKSRELDQQLVRLRPLAAQSETLRFEKSELATENERLRGEIAALQNASANGLAGAETVSRLTASLADAQAQLTARTAEQNLVMAQKDNEYATKTQQAAADYVAKLNAEREAYERNLRAKEDGLGATIQRLQEENAELRSTLDNRNREFAQGSDQFAAVNMQLNEARRAVAEKNGQLVAANEIRARLEQQLADATQQLAKTEQLLVQQQKSGPMETDKQEINKEESDYLLTALDIMYKNARILNPNLGGRDLSQNLNDLQFGLASEQRLALEQWFSTLRETTAPNDVLNFAALTNVNDLVNDLKSQIITKIPANMLRTFDNRIVKPEEAGAVDNVTLISAVSRLVDEYSRLGLENAQLESTNKTLYDDNVTLSETCTQQLKSLRDDLNKNMSNVDAINDLVKTTPELDKQAIQDVRTELSKTQSRLKSLKEAKLVELKQMASTSALEEMSKLNNNIREINSLLSKHAAITEDIFKWKTTMLEVYESLARTMAEENVLPPPTL</sequence>
<gene>
    <name type="ORF">ORF71</name>
</gene>
<accession>Q83949</accession>
<accession>O10323</accession>
<accession>Q65364</accession>
<dbReference type="EMBL" id="U75930">
    <property type="protein sequence ID" value="AAC59070.1"/>
    <property type="molecule type" value="Genomic_DNA"/>
</dbReference>
<dbReference type="EMBL" id="U39145">
    <property type="protein sequence ID" value="AAB04047.1"/>
    <property type="molecule type" value="Genomic_DNA"/>
</dbReference>
<dbReference type="EMBL" id="D45397">
    <property type="protein sequence ID" value="BAA08236.1"/>
    <property type="molecule type" value="Genomic_DNA"/>
</dbReference>
<dbReference type="RefSeq" id="NP_046227.1">
    <property type="nucleotide sequence ID" value="NC_001875.2"/>
</dbReference>
<dbReference type="SMR" id="Q83949"/>
<dbReference type="KEGG" id="vg:912045"/>
<dbReference type="OrthoDB" id="1496at10239"/>
<dbReference type="Proteomes" id="UP000009248">
    <property type="component" value="Genome"/>
</dbReference>
<dbReference type="InterPro" id="IPR009615">
    <property type="entry name" value="Desmo_N"/>
</dbReference>
<dbReference type="Pfam" id="PF06771">
    <property type="entry name" value="Desmo_N"/>
    <property type="match status" value="1"/>
</dbReference>
<dbReference type="SUPFAM" id="SSF81995">
    <property type="entry name" value="beta-sandwich domain of Sec23/24"/>
    <property type="match status" value="1"/>
</dbReference>
<name>Y066_NPVOP</name>
<protein>
    <recommendedName>
        <fullName>Uncharacterized 98.6 kDa protein</fullName>
    </recommendedName>
</protein>